<dbReference type="EC" id="4.1.1.37" evidence="1"/>
<dbReference type="EMBL" id="AE017340">
    <property type="protein sequence ID" value="AAV83138.1"/>
    <property type="molecule type" value="Genomic_DNA"/>
</dbReference>
<dbReference type="RefSeq" id="WP_011235532.1">
    <property type="nucleotide sequence ID" value="NC_006512.1"/>
</dbReference>
<dbReference type="SMR" id="Q5QVW3"/>
<dbReference type="STRING" id="283942.IL2306"/>
<dbReference type="GeneID" id="41337502"/>
<dbReference type="KEGG" id="ilo:IL2306"/>
<dbReference type="eggNOG" id="COG0407">
    <property type="taxonomic scope" value="Bacteria"/>
</dbReference>
<dbReference type="HOGENOM" id="CLU_040933_0_0_6"/>
<dbReference type="OrthoDB" id="9806656at2"/>
<dbReference type="UniPathway" id="UPA00251">
    <property type="reaction ID" value="UER00321"/>
</dbReference>
<dbReference type="Proteomes" id="UP000001171">
    <property type="component" value="Chromosome"/>
</dbReference>
<dbReference type="GO" id="GO:0005829">
    <property type="term" value="C:cytosol"/>
    <property type="evidence" value="ECO:0007669"/>
    <property type="project" value="TreeGrafter"/>
</dbReference>
<dbReference type="GO" id="GO:0004853">
    <property type="term" value="F:uroporphyrinogen decarboxylase activity"/>
    <property type="evidence" value="ECO:0007669"/>
    <property type="project" value="UniProtKB-UniRule"/>
</dbReference>
<dbReference type="GO" id="GO:0019353">
    <property type="term" value="P:protoporphyrinogen IX biosynthetic process from glutamate"/>
    <property type="evidence" value="ECO:0007669"/>
    <property type="project" value="TreeGrafter"/>
</dbReference>
<dbReference type="CDD" id="cd00717">
    <property type="entry name" value="URO-D"/>
    <property type="match status" value="1"/>
</dbReference>
<dbReference type="FunFam" id="3.20.20.210:FF:000001">
    <property type="entry name" value="Uroporphyrinogen decarboxylase"/>
    <property type="match status" value="1"/>
</dbReference>
<dbReference type="Gene3D" id="3.20.20.210">
    <property type="match status" value="1"/>
</dbReference>
<dbReference type="HAMAP" id="MF_00218">
    <property type="entry name" value="URO_D"/>
    <property type="match status" value="1"/>
</dbReference>
<dbReference type="InterPro" id="IPR038071">
    <property type="entry name" value="UROD/MetE-like_sf"/>
</dbReference>
<dbReference type="InterPro" id="IPR006361">
    <property type="entry name" value="Uroporphyrinogen_deCO2ase_HemE"/>
</dbReference>
<dbReference type="InterPro" id="IPR000257">
    <property type="entry name" value="Uroporphyrinogen_deCOase"/>
</dbReference>
<dbReference type="NCBIfam" id="TIGR01464">
    <property type="entry name" value="hemE"/>
    <property type="match status" value="1"/>
</dbReference>
<dbReference type="PANTHER" id="PTHR21091">
    <property type="entry name" value="METHYLTETRAHYDROFOLATE:HOMOCYSTEINE METHYLTRANSFERASE RELATED"/>
    <property type="match status" value="1"/>
</dbReference>
<dbReference type="PANTHER" id="PTHR21091:SF169">
    <property type="entry name" value="UROPORPHYRINOGEN DECARBOXYLASE"/>
    <property type="match status" value="1"/>
</dbReference>
<dbReference type="Pfam" id="PF01208">
    <property type="entry name" value="URO-D"/>
    <property type="match status" value="1"/>
</dbReference>
<dbReference type="SUPFAM" id="SSF51726">
    <property type="entry name" value="UROD/MetE-like"/>
    <property type="match status" value="1"/>
</dbReference>
<dbReference type="PROSITE" id="PS00906">
    <property type="entry name" value="UROD_1"/>
    <property type="match status" value="1"/>
</dbReference>
<dbReference type="PROSITE" id="PS00907">
    <property type="entry name" value="UROD_2"/>
    <property type="match status" value="1"/>
</dbReference>
<keyword id="KW-0963">Cytoplasm</keyword>
<keyword id="KW-0210">Decarboxylase</keyword>
<keyword id="KW-0456">Lyase</keyword>
<keyword id="KW-0627">Porphyrin biosynthesis</keyword>
<keyword id="KW-1185">Reference proteome</keyword>
<gene>
    <name evidence="1" type="primary">hemE</name>
    <name type="ordered locus">IL2306</name>
</gene>
<protein>
    <recommendedName>
        <fullName evidence="1">Uroporphyrinogen decarboxylase</fullName>
        <shortName evidence="1">UPD</shortName>
        <shortName evidence="1">URO-D</shortName>
        <ecNumber evidence="1">4.1.1.37</ecNumber>
    </recommendedName>
</protein>
<accession>Q5QVW3</accession>
<evidence type="ECO:0000255" key="1">
    <source>
        <dbReference type="HAMAP-Rule" id="MF_00218"/>
    </source>
</evidence>
<name>DCUP_IDILO</name>
<reference key="1">
    <citation type="journal article" date="2004" name="Proc. Natl. Acad. Sci. U.S.A.">
        <title>Genome sequence of the deep-sea gamma-proteobacterium Idiomarina loihiensis reveals amino acid fermentation as a source of carbon and energy.</title>
        <authorList>
            <person name="Hou S."/>
            <person name="Saw J.H."/>
            <person name="Lee K.S."/>
            <person name="Freitas T.A."/>
            <person name="Belisle C."/>
            <person name="Kawarabayasi Y."/>
            <person name="Donachie S.P."/>
            <person name="Pikina A."/>
            <person name="Galperin M.Y."/>
            <person name="Koonin E.V."/>
            <person name="Makarova K.S."/>
            <person name="Omelchenko M.V."/>
            <person name="Sorokin A."/>
            <person name="Wolf Y.I."/>
            <person name="Li Q.X."/>
            <person name="Keum Y.S."/>
            <person name="Campbell S."/>
            <person name="Denery J."/>
            <person name="Aizawa S."/>
            <person name="Shibata S."/>
            <person name="Malahoff A."/>
            <person name="Alam M."/>
        </authorList>
    </citation>
    <scope>NUCLEOTIDE SEQUENCE [LARGE SCALE GENOMIC DNA]</scope>
    <source>
        <strain>ATCC BAA-735 / DSM 15497 / L2-TR</strain>
    </source>
</reference>
<feature type="chain" id="PRO_0000325656" description="Uroporphyrinogen decarboxylase">
    <location>
        <begin position="1"/>
        <end position="358"/>
    </location>
</feature>
<feature type="binding site" evidence="1">
    <location>
        <begin position="29"/>
        <end position="33"/>
    </location>
    <ligand>
        <name>substrate</name>
    </ligand>
</feature>
<feature type="binding site" evidence="1">
    <location>
        <position position="79"/>
    </location>
    <ligand>
        <name>substrate</name>
    </ligand>
</feature>
<feature type="binding site" evidence="1">
    <location>
        <position position="156"/>
    </location>
    <ligand>
        <name>substrate</name>
    </ligand>
</feature>
<feature type="binding site" evidence="1">
    <location>
        <position position="211"/>
    </location>
    <ligand>
        <name>substrate</name>
    </ligand>
</feature>
<feature type="binding site" evidence="1">
    <location>
        <position position="329"/>
    </location>
    <ligand>
        <name>substrate</name>
    </ligand>
</feature>
<feature type="site" description="Transition state stabilizer" evidence="1">
    <location>
        <position position="79"/>
    </location>
</feature>
<organism>
    <name type="scientific">Idiomarina loihiensis (strain ATCC BAA-735 / DSM 15497 / L2-TR)</name>
    <dbReference type="NCBI Taxonomy" id="283942"/>
    <lineage>
        <taxon>Bacteria</taxon>
        <taxon>Pseudomonadati</taxon>
        <taxon>Pseudomonadota</taxon>
        <taxon>Gammaproteobacteria</taxon>
        <taxon>Alteromonadales</taxon>
        <taxon>Idiomarinaceae</taxon>
        <taxon>Idiomarina</taxon>
    </lineage>
</organism>
<proteinExistence type="inferred from homology"/>
<comment type="function">
    <text evidence="1">Catalyzes the decarboxylation of four acetate groups of uroporphyrinogen-III to yield coproporphyrinogen-III.</text>
</comment>
<comment type="catalytic activity">
    <reaction evidence="1">
        <text>uroporphyrinogen III + 4 H(+) = coproporphyrinogen III + 4 CO2</text>
        <dbReference type="Rhea" id="RHEA:19865"/>
        <dbReference type="ChEBI" id="CHEBI:15378"/>
        <dbReference type="ChEBI" id="CHEBI:16526"/>
        <dbReference type="ChEBI" id="CHEBI:57308"/>
        <dbReference type="ChEBI" id="CHEBI:57309"/>
        <dbReference type="EC" id="4.1.1.37"/>
    </reaction>
</comment>
<comment type="pathway">
    <text evidence="1">Porphyrin-containing compound metabolism; protoporphyrin-IX biosynthesis; coproporphyrinogen-III from 5-aminolevulinate: step 4/4.</text>
</comment>
<comment type="subunit">
    <text evidence="1">Homodimer.</text>
</comment>
<comment type="subcellular location">
    <subcellularLocation>
        <location evidence="1">Cytoplasm</location>
    </subcellularLocation>
</comment>
<comment type="similarity">
    <text evidence="1">Belongs to the uroporphyrinogen decarboxylase family.</text>
</comment>
<sequence>MTAPALKNDRYLRALAKQPVDRTPVWMMRQAGRYLPEYKEVRGQAGDFMSLCRNTELACEVTMQPLRRFDLDAAILFSDILTIPDAMGLGLYFEAGEGPKFKDPVRSMAAIKNLAVPDMEDELGYVMDAVRAIRRELNGSVPLIGFSGSPWTLATYMVEGGSTKNFSKVKQLMFADPEAMHTLLNVLAESVTQYLNAQIAAGAQSVMIFDTWGGVLSPRDYKAFSLAYMEKIVAGLTREADGRKVPVTLFTKNGGQWLEAMAASGADALGVDWTTDLSDARARVGGQVALQGNMDPSVLYAKPARIEEEVQSILQSYGSGTGHVFNLGHGIHPEVDPEHAAAFIEAIHKYSPAFHSND</sequence>